<evidence type="ECO:0000255" key="1">
    <source>
        <dbReference type="HAMAP-Rule" id="MF_00394"/>
    </source>
</evidence>
<organism>
    <name type="scientific">Haemophilus ducreyi (strain 35000HP / ATCC 700724)</name>
    <dbReference type="NCBI Taxonomy" id="233412"/>
    <lineage>
        <taxon>Bacteria</taxon>
        <taxon>Pseudomonadati</taxon>
        <taxon>Pseudomonadota</taxon>
        <taxon>Gammaproteobacteria</taxon>
        <taxon>Pasteurellales</taxon>
        <taxon>Pasteurellaceae</taxon>
        <taxon>Haemophilus</taxon>
    </lineage>
</organism>
<protein>
    <recommendedName>
        <fullName evidence="1">Glycerol-3-phosphate dehydrogenase [NAD(P)+]</fullName>
        <ecNumber evidence="1">1.1.1.94</ecNumber>
    </recommendedName>
    <alternativeName>
        <fullName evidence="1">NAD(P)(+)-dependent glycerol-3-phosphate dehydrogenase</fullName>
    </alternativeName>
    <alternativeName>
        <fullName evidence="1">NAD(P)H-dependent dihydroxyacetone-phosphate reductase</fullName>
    </alternativeName>
</protein>
<sequence>MTTDDTRPIAVLGAGSYGTALAIALARNGQRTHLWGHNPDKMVKMAEQRMNTESLPAIPFPNALIIEKVLAHTLQQAQDILIVVPSHAFADILHQIKPLLTTQHRIMWATKGLEHNTGRLLQTVATEIIGEQHPFAVLSGPTFAKELALGLPTAITLASHDAKFADEMQQRIHCSKAFRVYLNTDMIGVQLGGAIKNVIAIGAGISDGMGFGANARTALITRGLAEISRLGESLGANPKTFMGMAGLGDLVLTCTDNQSRNRRFGLALGQGKSAEQAIAEIGQVVEGFYNTKETYLLAQRQNIEMPIVEQIYQMLFCNKNANDVVTSLLERQRKKE</sequence>
<comment type="function">
    <text evidence="1">Catalyzes the reduction of the glycolytic intermediate dihydroxyacetone phosphate (DHAP) to sn-glycerol 3-phosphate (G3P), the key precursor for phospholipid synthesis.</text>
</comment>
<comment type="catalytic activity">
    <reaction evidence="1">
        <text>sn-glycerol 3-phosphate + NAD(+) = dihydroxyacetone phosphate + NADH + H(+)</text>
        <dbReference type="Rhea" id="RHEA:11092"/>
        <dbReference type="ChEBI" id="CHEBI:15378"/>
        <dbReference type="ChEBI" id="CHEBI:57540"/>
        <dbReference type="ChEBI" id="CHEBI:57597"/>
        <dbReference type="ChEBI" id="CHEBI:57642"/>
        <dbReference type="ChEBI" id="CHEBI:57945"/>
        <dbReference type="EC" id="1.1.1.94"/>
    </reaction>
    <physiologicalReaction direction="right-to-left" evidence="1">
        <dbReference type="Rhea" id="RHEA:11094"/>
    </physiologicalReaction>
</comment>
<comment type="catalytic activity">
    <reaction evidence="1">
        <text>sn-glycerol 3-phosphate + NADP(+) = dihydroxyacetone phosphate + NADPH + H(+)</text>
        <dbReference type="Rhea" id="RHEA:11096"/>
        <dbReference type="ChEBI" id="CHEBI:15378"/>
        <dbReference type="ChEBI" id="CHEBI:57597"/>
        <dbReference type="ChEBI" id="CHEBI:57642"/>
        <dbReference type="ChEBI" id="CHEBI:57783"/>
        <dbReference type="ChEBI" id="CHEBI:58349"/>
        <dbReference type="EC" id="1.1.1.94"/>
    </reaction>
    <physiologicalReaction direction="right-to-left" evidence="1">
        <dbReference type="Rhea" id="RHEA:11098"/>
    </physiologicalReaction>
</comment>
<comment type="pathway">
    <text evidence="1">Membrane lipid metabolism; glycerophospholipid metabolism.</text>
</comment>
<comment type="subcellular location">
    <subcellularLocation>
        <location evidence="1">Cytoplasm</location>
    </subcellularLocation>
</comment>
<comment type="similarity">
    <text evidence="1">Belongs to the NAD-dependent glycerol-3-phosphate dehydrogenase family.</text>
</comment>
<reference key="1">
    <citation type="submission" date="2003-06" db="EMBL/GenBank/DDBJ databases">
        <title>The complete genome sequence of Haemophilus ducreyi.</title>
        <authorList>
            <person name="Munson R.S. Jr."/>
            <person name="Ray W.C."/>
            <person name="Mahairas G."/>
            <person name="Sabo P."/>
            <person name="Mungur R."/>
            <person name="Johnson L."/>
            <person name="Nguyen D."/>
            <person name="Wang J."/>
            <person name="Forst C."/>
            <person name="Hood L."/>
        </authorList>
    </citation>
    <scope>NUCLEOTIDE SEQUENCE [LARGE SCALE GENOMIC DNA]</scope>
    <source>
        <strain>35000HP / ATCC 700724</strain>
    </source>
</reference>
<keyword id="KW-0963">Cytoplasm</keyword>
<keyword id="KW-0444">Lipid biosynthesis</keyword>
<keyword id="KW-0443">Lipid metabolism</keyword>
<keyword id="KW-0520">NAD</keyword>
<keyword id="KW-0521">NADP</keyword>
<keyword id="KW-0547">Nucleotide-binding</keyword>
<keyword id="KW-0560">Oxidoreductase</keyword>
<keyword id="KW-0594">Phospholipid biosynthesis</keyword>
<keyword id="KW-1208">Phospholipid metabolism</keyword>
<keyword id="KW-1185">Reference proteome</keyword>
<dbReference type="EC" id="1.1.1.94" evidence="1"/>
<dbReference type="EMBL" id="AE017143">
    <property type="protein sequence ID" value="AAP95585.1"/>
    <property type="molecule type" value="Genomic_DNA"/>
</dbReference>
<dbReference type="RefSeq" id="WP_010944637.1">
    <property type="nucleotide sequence ID" value="NC_002940.2"/>
</dbReference>
<dbReference type="SMR" id="Q7VNA0"/>
<dbReference type="STRING" id="233412.HD_0660"/>
<dbReference type="KEGG" id="hdu:HD_0660"/>
<dbReference type="eggNOG" id="COG0240">
    <property type="taxonomic scope" value="Bacteria"/>
</dbReference>
<dbReference type="HOGENOM" id="CLU_033449_0_2_6"/>
<dbReference type="OrthoDB" id="9812273at2"/>
<dbReference type="UniPathway" id="UPA00940"/>
<dbReference type="Proteomes" id="UP000001022">
    <property type="component" value="Chromosome"/>
</dbReference>
<dbReference type="GO" id="GO:0005829">
    <property type="term" value="C:cytosol"/>
    <property type="evidence" value="ECO:0007669"/>
    <property type="project" value="TreeGrafter"/>
</dbReference>
<dbReference type="GO" id="GO:0047952">
    <property type="term" value="F:glycerol-3-phosphate dehydrogenase [NAD(P)+] activity"/>
    <property type="evidence" value="ECO:0007669"/>
    <property type="project" value="UniProtKB-UniRule"/>
</dbReference>
<dbReference type="GO" id="GO:0051287">
    <property type="term" value="F:NAD binding"/>
    <property type="evidence" value="ECO:0007669"/>
    <property type="project" value="InterPro"/>
</dbReference>
<dbReference type="GO" id="GO:0005975">
    <property type="term" value="P:carbohydrate metabolic process"/>
    <property type="evidence" value="ECO:0007669"/>
    <property type="project" value="InterPro"/>
</dbReference>
<dbReference type="GO" id="GO:0046167">
    <property type="term" value="P:glycerol-3-phosphate biosynthetic process"/>
    <property type="evidence" value="ECO:0007669"/>
    <property type="project" value="UniProtKB-UniRule"/>
</dbReference>
<dbReference type="GO" id="GO:0046168">
    <property type="term" value="P:glycerol-3-phosphate catabolic process"/>
    <property type="evidence" value="ECO:0007669"/>
    <property type="project" value="InterPro"/>
</dbReference>
<dbReference type="GO" id="GO:0046474">
    <property type="term" value="P:glycerophospholipid biosynthetic process"/>
    <property type="evidence" value="ECO:0007669"/>
    <property type="project" value="TreeGrafter"/>
</dbReference>
<dbReference type="FunFam" id="1.10.1040.10:FF:000001">
    <property type="entry name" value="Glycerol-3-phosphate dehydrogenase [NAD(P)+]"/>
    <property type="match status" value="1"/>
</dbReference>
<dbReference type="FunFam" id="3.40.50.720:FF:000019">
    <property type="entry name" value="Glycerol-3-phosphate dehydrogenase [NAD(P)+]"/>
    <property type="match status" value="1"/>
</dbReference>
<dbReference type="Gene3D" id="1.10.1040.10">
    <property type="entry name" value="N-(1-d-carboxylethyl)-l-norvaline Dehydrogenase, domain 2"/>
    <property type="match status" value="1"/>
</dbReference>
<dbReference type="Gene3D" id="3.40.50.720">
    <property type="entry name" value="NAD(P)-binding Rossmann-like Domain"/>
    <property type="match status" value="1"/>
</dbReference>
<dbReference type="HAMAP" id="MF_00394">
    <property type="entry name" value="NAD_Glyc3P_dehydrog"/>
    <property type="match status" value="1"/>
</dbReference>
<dbReference type="InterPro" id="IPR008927">
    <property type="entry name" value="6-PGluconate_DH-like_C_sf"/>
</dbReference>
<dbReference type="InterPro" id="IPR013328">
    <property type="entry name" value="6PGD_dom2"/>
</dbReference>
<dbReference type="InterPro" id="IPR006168">
    <property type="entry name" value="G3P_DH_NAD-dep"/>
</dbReference>
<dbReference type="InterPro" id="IPR006109">
    <property type="entry name" value="G3P_DH_NAD-dep_C"/>
</dbReference>
<dbReference type="InterPro" id="IPR011128">
    <property type="entry name" value="G3P_DH_NAD-dep_N"/>
</dbReference>
<dbReference type="InterPro" id="IPR036291">
    <property type="entry name" value="NAD(P)-bd_dom_sf"/>
</dbReference>
<dbReference type="NCBIfam" id="NF000939">
    <property type="entry name" value="PRK00094.1-1"/>
    <property type="match status" value="1"/>
</dbReference>
<dbReference type="NCBIfam" id="NF000940">
    <property type="entry name" value="PRK00094.1-2"/>
    <property type="match status" value="1"/>
</dbReference>
<dbReference type="NCBIfam" id="NF000942">
    <property type="entry name" value="PRK00094.1-4"/>
    <property type="match status" value="1"/>
</dbReference>
<dbReference type="PANTHER" id="PTHR11728">
    <property type="entry name" value="GLYCEROL-3-PHOSPHATE DEHYDROGENASE"/>
    <property type="match status" value="1"/>
</dbReference>
<dbReference type="PANTHER" id="PTHR11728:SF1">
    <property type="entry name" value="GLYCEROL-3-PHOSPHATE DEHYDROGENASE [NAD(+)] 2, CHLOROPLASTIC"/>
    <property type="match status" value="1"/>
</dbReference>
<dbReference type="Pfam" id="PF07479">
    <property type="entry name" value="NAD_Gly3P_dh_C"/>
    <property type="match status" value="1"/>
</dbReference>
<dbReference type="Pfam" id="PF01210">
    <property type="entry name" value="NAD_Gly3P_dh_N"/>
    <property type="match status" value="1"/>
</dbReference>
<dbReference type="PIRSF" id="PIRSF000114">
    <property type="entry name" value="Glycerol-3-P_dh"/>
    <property type="match status" value="1"/>
</dbReference>
<dbReference type="PRINTS" id="PR00077">
    <property type="entry name" value="GPDHDRGNASE"/>
</dbReference>
<dbReference type="SUPFAM" id="SSF48179">
    <property type="entry name" value="6-phosphogluconate dehydrogenase C-terminal domain-like"/>
    <property type="match status" value="1"/>
</dbReference>
<dbReference type="SUPFAM" id="SSF51735">
    <property type="entry name" value="NAD(P)-binding Rossmann-fold domains"/>
    <property type="match status" value="1"/>
</dbReference>
<dbReference type="PROSITE" id="PS00957">
    <property type="entry name" value="NAD_G3PDH"/>
    <property type="match status" value="1"/>
</dbReference>
<accession>Q7VNA0</accession>
<proteinExistence type="inferred from homology"/>
<gene>
    <name evidence="1" type="primary">gpsA</name>
    <name type="ordered locus">HD_0660</name>
</gene>
<name>GPDA_HAEDU</name>
<feature type="chain" id="PRO_0000137968" description="Glycerol-3-phosphate dehydrogenase [NAD(P)+]">
    <location>
        <begin position="1"/>
        <end position="336"/>
    </location>
</feature>
<feature type="active site" description="Proton acceptor" evidence="1">
    <location>
        <position position="196"/>
    </location>
</feature>
<feature type="binding site" evidence="1">
    <location>
        <position position="16"/>
    </location>
    <ligand>
        <name>NADPH</name>
        <dbReference type="ChEBI" id="CHEBI:57783"/>
    </ligand>
</feature>
<feature type="binding site" evidence="1">
    <location>
        <position position="17"/>
    </location>
    <ligand>
        <name>NADPH</name>
        <dbReference type="ChEBI" id="CHEBI:57783"/>
    </ligand>
</feature>
<feature type="binding site" evidence="1">
    <location>
        <position position="37"/>
    </location>
    <ligand>
        <name>NADPH</name>
        <dbReference type="ChEBI" id="CHEBI:57783"/>
    </ligand>
</feature>
<feature type="binding site" evidence="1">
    <location>
        <position position="111"/>
    </location>
    <ligand>
        <name>NADPH</name>
        <dbReference type="ChEBI" id="CHEBI:57783"/>
    </ligand>
</feature>
<feature type="binding site" evidence="1">
    <location>
        <position position="111"/>
    </location>
    <ligand>
        <name>sn-glycerol 3-phosphate</name>
        <dbReference type="ChEBI" id="CHEBI:57597"/>
    </ligand>
</feature>
<feature type="binding site" evidence="1">
    <location>
        <position position="140"/>
    </location>
    <ligand>
        <name>sn-glycerol 3-phosphate</name>
        <dbReference type="ChEBI" id="CHEBI:57597"/>
    </ligand>
</feature>
<feature type="binding site" evidence="1">
    <location>
        <position position="142"/>
    </location>
    <ligand>
        <name>sn-glycerol 3-phosphate</name>
        <dbReference type="ChEBI" id="CHEBI:57597"/>
    </ligand>
</feature>
<feature type="binding site" evidence="1">
    <location>
        <position position="144"/>
    </location>
    <ligand>
        <name>NADPH</name>
        <dbReference type="ChEBI" id="CHEBI:57783"/>
    </ligand>
</feature>
<feature type="binding site" evidence="1">
    <location>
        <position position="196"/>
    </location>
    <ligand>
        <name>sn-glycerol 3-phosphate</name>
        <dbReference type="ChEBI" id="CHEBI:57597"/>
    </ligand>
</feature>
<feature type="binding site" evidence="1">
    <location>
        <position position="249"/>
    </location>
    <ligand>
        <name>sn-glycerol 3-phosphate</name>
        <dbReference type="ChEBI" id="CHEBI:57597"/>
    </ligand>
</feature>
<feature type="binding site" evidence="1">
    <location>
        <position position="259"/>
    </location>
    <ligand>
        <name>sn-glycerol 3-phosphate</name>
        <dbReference type="ChEBI" id="CHEBI:57597"/>
    </ligand>
</feature>
<feature type="binding site" evidence="1">
    <location>
        <position position="260"/>
    </location>
    <ligand>
        <name>NADPH</name>
        <dbReference type="ChEBI" id="CHEBI:57783"/>
    </ligand>
</feature>
<feature type="binding site" evidence="1">
    <location>
        <position position="260"/>
    </location>
    <ligand>
        <name>sn-glycerol 3-phosphate</name>
        <dbReference type="ChEBI" id="CHEBI:57597"/>
    </ligand>
</feature>
<feature type="binding site" evidence="1">
    <location>
        <position position="261"/>
    </location>
    <ligand>
        <name>sn-glycerol 3-phosphate</name>
        <dbReference type="ChEBI" id="CHEBI:57597"/>
    </ligand>
</feature>
<feature type="binding site" evidence="1">
    <location>
        <position position="284"/>
    </location>
    <ligand>
        <name>NADPH</name>
        <dbReference type="ChEBI" id="CHEBI:57783"/>
    </ligand>
</feature>
<feature type="binding site" evidence="1">
    <location>
        <position position="286"/>
    </location>
    <ligand>
        <name>NADPH</name>
        <dbReference type="ChEBI" id="CHEBI:57783"/>
    </ligand>
</feature>